<name>SHAKB_DROME</name>
<reference key="1">
    <citation type="journal article" date="1992" name="Gene">
        <title>Analysis of a cDNA from the neurologically active locus shaking-B (Passover) of Drosophila melanogaster.</title>
        <authorList>
            <person name="Crompton D.E."/>
            <person name="Griffin A."/>
            <person name="Davies J.A."/>
            <person name="Miklos G.L.G."/>
        </authorList>
    </citation>
    <scope>NUCLEOTIDE SEQUENCE [MRNA] (ISOFORM B)</scope>
    <source>
        <strain>Oregon-R</strain>
        <tissue>Embryo</tissue>
    </source>
</reference>
<reference key="2">
    <citation type="journal article" date="1993" name="Cell">
        <title>Passover: a gene required for synaptic connectivity in the giant fiber system of Drosophila.</title>
        <authorList>
            <person name="Krishnan S.N."/>
            <person name="Frei E."/>
            <person name="Swain G.P."/>
            <person name="Wyman R.J."/>
        </authorList>
    </citation>
    <scope>NUCLEOTIDE SEQUENCE [MRNA] (ISOFORM NEURAL)</scope>
    <scope>DISRUPTION PHENOTYPE</scope>
    <source>
        <strain>Oregon-R</strain>
        <tissue>Pupae</tissue>
    </source>
</reference>
<reference key="3">
    <citation type="journal article" date="1995" name="Dev. Biol.">
        <title>Essential and neural transcripts from the Drosophila shaking-B locus are differentially expressed in the embryonic mesoderm and pupal nervous system.</title>
        <authorList>
            <person name="Crompton D."/>
            <person name="Todman M."/>
            <person name="Wilkin M."/>
            <person name="Ji S."/>
            <person name="Davies J."/>
        </authorList>
    </citation>
    <scope>NUCLEOTIDE SEQUENCE [MRNA] (ISOFORM LETHAL)</scope>
    <source>
        <tissue>Embryo</tissue>
    </source>
</reference>
<reference key="4">
    <citation type="journal article" date="1995" name="Proc. Natl. Acad. Sci. U.S.A.">
        <title>Molecular basis of intracistronic complementation in the Passover locus of Drosophila.</title>
        <authorList>
            <person name="Krishnan S.N."/>
            <person name="Frei E."/>
            <person name="Schalet A.P."/>
            <person name="Wyman R.J."/>
        </authorList>
    </citation>
    <scope>NUCLEOTIDE SEQUENCE [MRNA] (ISOFORM LETHAL)</scope>
</reference>
<reference key="5">
    <citation type="journal article" date="2000" name="Science">
        <title>The genome sequence of Drosophila melanogaster.</title>
        <authorList>
            <person name="Adams M.D."/>
            <person name="Celniker S.E."/>
            <person name="Holt R.A."/>
            <person name="Evans C.A."/>
            <person name="Gocayne J.D."/>
            <person name="Amanatides P.G."/>
            <person name="Scherer S.E."/>
            <person name="Li P.W."/>
            <person name="Hoskins R.A."/>
            <person name="Galle R.F."/>
            <person name="George R.A."/>
            <person name="Lewis S.E."/>
            <person name="Richards S."/>
            <person name="Ashburner M."/>
            <person name="Henderson S.N."/>
            <person name="Sutton G.G."/>
            <person name="Wortman J.R."/>
            <person name="Yandell M.D."/>
            <person name="Zhang Q."/>
            <person name="Chen L.X."/>
            <person name="Brandon R.C."/>
            <person name="Rogers Y.-H.C."/>
            <person name="Blazej R.G."/>
            <person name="Champe M."/>
            <person name="Pfeiffer B.D."/>
            <person name="Wan K.H."/>
            <person name="Doyle C."/>
            <person name="Baxter E.G."/>
            <person name="Helt G."/>
            <person name="Nelson C.R."/>
            <person name="Miklos G.L.G."/>
            <person name="Abril J.F."/>
            <person name="Agbayani A."/>
            <person name="An H.-J."/>
            <person name="Andrews-Pfannkoch C."/>
            <person name="Baldwin D."/>
            <person name="Ballew R.M."/>
            <person name="Basu A."/>
            <person name="Baxendale J."/>
            <person name="Bayraktaroglu L."/>
            <person name="Beasley E.M."/>
            <person name="Beeson K.Y."/>
            <person name="Benos P.V."/>
            <person name="Berman B.P."/>
            <person name="Bhandari D."/>
            <person name="Bolshakov S."/>
            <person name="Borkova D."/>
            <person name="Botchan M.R."/>
            <person name="Bouck J."/>
            <person name="Brokstein P."/>
            <person name="Brottier P."/>
            <person name="Burtis K.C."/>
            <person name="Busam D.A."/>
            <person name="Butler H."/>
            <person name="Cadieu E."/>
            <person name="Center A."/>
            <person name="Chandra I."/>
            <person name="Cherry J.M."/>
            <person name="Cawley S."/>
            <person name="Dahlke C."/>
            <person name="Davenport L.B."/>
            <person name="Davies P."/>
            <person name="de Pablos B."/>
            <person name="Delcher A."/>
            <person name="Deng Z."/>
            <person name="Mays A.D."/>
            <person name="Dew I."/>
            <person name="Dietz S.M."/>
            <person name="Dodson K."/>
            <person name="Doup L.E."/>
            <person name="Downes M."/>
            <person name="Dugan-Rocha S."/>
            <person name="Dunkov B.C."/>
            <person name="Dunn P."/>
            <person name="Durbin K.J."/>
            <person name="Evangelista C.C."/>
            <person name="Ferraz C."/>
            <person name="Ferriera S."/>
            <person name="Fleischmann W."/>
            <person name="Fosler C."/>
            <person name="Gabrielian A.E."/>
            <person name="Garg N.S."/>
            <person name="Gelbart W.M."/>
            <person name="Glasser K."/>
            <person name="Glodek A."/>
            <person name="Gong F."/>
            <person name="Gorrell J.H."/>
            <person name="Gu Z."/>
            <person name="Guan P."/>
            <person name="Harris M."/>
            <person name="Harris N.L."/>
            <person name="Harvey D.A."/>
            <person name="Heiman T.J."/>
            <person name="Hernandez J.R."/>
            <person name="Houck J."/>
            <person name="Hostin D."/>
            <person name="Houston K.A."/>
            <person name="Howland T.J."/>
            <person name="Wei M.-H."/>
            <person name="Ibegwam C."/>
            <person name="Jalali M."/>
            <person name="Kalush F."/>
            <person name="Karpen G.H."/>
            <person name="Ke Z."/>
            <person name="Kennison J.A."/>
            <person name="Ketchum K.A."/>
            <person name="Kimmel B.E."/>
            <person name="Kodira C.D."/>
            <person name="Kraft C.L."/>
            <person name="Kravitz S."/>
            <person name="Kulp D."/>
            <person name="Lai Z."/>
            <person name="Lasko P."/>
            <person name="Lei Y."/>
            <person name="Levitsky A.A."/>
            <person name="Li J.H."/>
            <person name="Li Z."/>
            <person name="Liang Y."/>
            <person name="Lin X."/>
            <person name="Liu X."/>
            <person name="Mattei B."/>
            <person name="McIntosh T.C."/>
            <person name="McLeod M.P."/>
            <person name="McPherson D."/>
            <person name="Merkulov G."/>
            <person name="Milshina N.V."/>
            <person name="Mobarry C."/>
            <person name="Morris J."/>
            <person name="Moshrefi A."/>
            <person name="Mount S.M."/>
            <person name="Moy M."/>
            <person name="Murphy B."/>
            <person name="Murphy L."/>
            <person name="Muzny D.M."/>
            <person name="Nelson D.L."/>
            <person name="Nelson D.R."/>
            <person name="Nelson K.A."/>
            <person name="Nixon K."/>
            <person name="Nusskern D.R."/>
            <person name="Pacleb J.M."/>
            <person name="Palazzolo M."/>
            <person name="Pittman G.S."/>
            <person name="Pan S."/>
            <person name="Pollard J."/>
            <person name="Puri V."/>
            <person name="Reese M.G."/>
            <person name="Reinert K."/>
            <person name="Remington K."/>
            <person name="Saunders R.D.C."/>
            <person name="Scheeler F."/>
            <person name="Shen H."/>
            <person name="Shue B.C."/>
            <person name="Siden-Kiamos I."/>
            <person name="Simpson M."/>
            <person name="Skupski M.P."/>
            <person name="Smith T.J."/>
            <person name="Spier E."/>
            <person name="Spradling A.C."/>
            <person name="Stapleton M."/>
            <person name="Strong R."/>
            <person name="Sun E."/>
            <person name="Svirskas R."/>
            <person name="Tector C."/>
            <person name="Turner R."/>
            <person name="Venter E."/>
            <person name="Wang A.H."/>
            <person name="Wang X."/>
            <person name="Wang Z.-Y."/>
            <person name="Wassarman D.A."/>
            <person name="Weinstock G.M."/>
            <person name="Weissenbach J."/>
            <person name="Williams S.M."/>
            <person name="Woodage T."/>
            <person name="Worley K.C."/>
            <person name="Wu D."/>
            <person name="Yang S."/>
            <person name="Yao Q.A."/>
            <person name="Ye J."/>
            <person name="Yeh R.-F."/>
            <person name="Zaveri J.S."/>
            <person name="Zhan M."/>
            <person name="Zhang G."/>
            <person name="Zhao Q."/>
            <person name="Zheng L."/>
            <person name="Zheng X.H."/>
            <person name="Zhong F.N."/>
            <person name="Zhong W."/>
            <person name="Zhou X."/>
            <person name="Zhu S.C."/>
            <person name="Zhu X."/>
            <person name="Smith H.O."/>
            <person name="Gibbs R.A."/>
            <person name="Myers E.W."/>
            <person name="Rubin G.M."/>
            <person name="Venter J.C."/>
        </authorList>
    </citation>
    <scope>NUCLEOTIDE SEQUENCE [LARGE SCALE GENOMIC DNA]</scope>
    <source>
        <strain>Berkeley</strain>
    </source>
</reference>
<reference key="6">
    <citation type="journal article" date="2002" name="Genome Biol.">
        <title>Annotation of the Drosophila melanogaster euchromatic genome: a systematic review.</title>
        <authorList>
            <person name="Misra S."/>
            <person name="Crosby M.A."/>
            <person name="Mungall C.J."/>
            <person name="Matthews B.B."/>
            <person name="Campbell K.S."/>
            <person name="Hradecky P."/>
            <person name="Huang Y."/>
            <person name="Kaminker J.S."/>
            <person name="Millburn G.H."/>
            <person name="Prochnik S.E."/>
            <person name="Smith C.D."/>
            <person name="Tupy J.L."/>
            <person name="Whitfield E.J."/>
            <person name="Bayraktaroglu L."/>
            <person name="Berman B.P."/>
            <person name="Bettencourt B.R."/>
            <person name="Celniker S.E."/>
            <person name="de Grey A.D.N.J."/>
            <person name="Drysdale R.A."/>
            <person name="Harris N.L."/>
            <person name="Richter J."/>
            <person name="Russo S."/>
            <person name="Schroeder A.J."/>
            <person name="Shu S.Q."/>
            <person name="Stapleton M."/>
            <person name="Yamada C."/>
            <person name="Ashburner M."/>
            <person name="Gelbart W.M."/>
            <person name="Rubin G.M."/>
            <person name="Lewis S.E."/>
        </authorList>
    </citation>
    <scope>GENOME REANNOTATION</scope>
    <scope>ALTERNATIVE SPLICING</scope>
    <source>
        <strain>Berkeley</strain>
    </source>
</reference>
<reference key="7">
    <citation type="submission" date="2006-04" db="EMBL/GenBank/DDBJ databases">
        <authorList>
            <person name="Stapleton M."/>
            <person name="Carlson J.W."/>
            <person name="Chavez C."/>
            <person name="Frise E."/>
            <person name="George R.A."/>
            <person name="Pacleb J.M."/>
            <person name="Park S."/>
            <person name="Wan K.H."/>
            <person name="Yu C."/>
            <person name="Celniker S.E."/>
        </authorList>
    </citation>
    <scope>NUCLEOTIDE SEQUENCE [LARGE SCALE MRNA] (ISOFORM D)</scope>
    <source>
        <strain>Berkeley</strain>
    </source>
</reference>
<reference key="8">
    <citation type="journal article" date="1998" name="J. Neurobiol.">
        <title>The shaking B gene in Drosophila regulates the number of gap junctions between photoreceptor terminals in the lamina.</title>
        <authorList>
            <person name="Shimohigashi M."/>
            <person name="Meinertzhagen I.A."/>
        </authorList>
    </citation>
    <scope>FUNCTION</scope>
</reference>
<reference key="9">
    <citation type="journal article" date="1998" name="Nature">
        <title>Drosophila Shaking-B protein forms gap junctions in paired Xenopus oocytes.</title>
        <authorList>
            <person name="Phelan P."/>
            <person name="Stebbings L.A."/>
            <person name="Baines R.A."/>
            <person name="Bacon J.P."/>
            <person name="Davies J.A."/>
            <person name="Ford C."/>
        </authorList>
    </citation>
    <scope>FUNCTION</scope>
    <scope>SUBUNIT</scope>
</reference>
<reference key="10">
    <citation type="journal article" date="1999" name="J. Neurobiol.">
        <title>Nested transcripts of gap junction gene have distinct expression patterns.</title>
        <authorList>
            <person name="Zhang Z."/>
            <person name="Curtin K.D."/>
            <person name="Sun Y.A."/>
            <person name="Wyman R.J."/>
        </authorList>
    </citation>
    <scope>ALTERNATIVE SPLICING</scope>
</reference>
<gene>
    <name type="primary">shakB</name>
    <name type="synonym">Pas</name>
    <name type="synonym">shak-B</name>
    <name type="ORF">CG34358</name>
</gene>
<comment type="function">
    <text evidence="4 5">Structural component of the gap junctions at electrical synapses in distal and mid-depth levels in the lamina. Isoform Lethal forms voltage sensitive intercellular channels through homotypic interactions.</text>
</comment>
<comment type="subunit">
    <text evidence="4">Monomer (isoform Lethal).</text>
</comment>
<comment type="subcellular location">
    <subcellularLocation>
        <location evidence="9">Cell membrane</location>
        <topology evidence="2">Multi-pass membrane protein</topology>
    </subcellularLocation>
    <subcellularLocation>
        <location>Cell junction</location>
        <location>Gap junction</location>
    </subcellularLocation>
</comment>
<comment type="alternative products">
    <event type="alternative splicing"/>
    <isoform>
        <id>P33085-1</id>
        <name>Lethal</name>
        <name>A</name>
        <sequence type="displayed"/>
    </isoform>
    <isoform>
        <id>P33085-2</id>
        <name>Neural</name>
        <name>C</name>
        <sequence type="described" ref="VSP_002678 VSP_002679"/>
    </isoform>
    <isoform>
        <id>P33085-3</id>
        <name>B</name>
        <sequence type="described" ref="VSP_012897 VSP_012898"/>
    </isoform>
    <isoform>
        <id>P33085-4</id>
        <name>D</name>
        <sequence type="described" ref="VSP_036913"/>
    </isoform>
    <isoform>
        <id>P33085-6</id>
        <name>E</name>
        <sequence type="described" ref="VSP_037474"/>
    </isoform>
    <isoform>
        <id>P33085-5</id>
        <name>F</name>
        <sequence type="described" ref="VSP_036914 VSP_036915"/>
    </isoform>
    <text>Additional isoforms seem to exist.</text>
</comment>
<comment type="tissue specificity">
    <text>Isoform Neural is expressed in synapses of giant fibers (GF), in a large thoracic cell in location of postsynaptic target and optic lobe lamina and medulla. Isoform Lethal is expressed in embryonic mesodermal derivatives. During metamorphosis, both isoforms are dynamically expressed in pupal nervous system.</text>
</comment>
<comment type="disruption phenotype">
    <text evidence="3">Flies fail to jump in response to a light-off stimulus. Neural-specific mutants exhibit modified giant fiber system and gustatory response.</text>
</comment>
<comment type="similarity">
    <text evidence="2">Belongs to the pannexin family.</text>
</comment>
<accession>P33085</accession>
<accession>A8JUT3</accession>
<accession>B7Z104</accession>
<accession>Q1RKZ8</accession>
<accession>Q24011</accession>
<accession>Q24520</accession>
<accession>Q26432</accession>
<accession>Q9VRB9</accession>
<accession>Q9VRC0</accession>
<accession>Q9VRC2</accession>
<feature type="chain" id="PRO_0000208500" description="Innexin shaking-B">
    <location>
        <begin position="1"/>
        <end position="372"/>
    </location>
</feature>
<feature type="topological domain" description="Cytoplasmic" evidence="1">
    <location>
        <begin position="1"/>
        <end position="21"/>
    </location>
</feature>
<feature type="transmembrane region" description="Helical" evidence="2">
    <location>
        <begin position="22"/>
        <end position="42"/>
    </location>
</feature>
<feature type="topological domain" description="Extracellular" evidence="1">
    <location>
        <begin position="43"/>
        <end position="110"/>
    </location>
</feature>
<feature type="transmembrane region" description="Helical" evidence="2">
    <location>
        <begin position="111"/>
        <end position="131"/>
    </location>
</feature>
<feature type="topological domain" description="Cytoplasmic" evidence="1">
    <location>
        <begin position="132"/>
        <end position="182"/>
    </location>
</feature>
<feature type="transmembrane region" description="Helical" evidence="2">
    <location>
        <begin position="183"/>
        <end position="203"/>
    </location>
</feature>
<feature type="topological domain" description="Extracellular" evidence="1">
    <location>
        <begin position="204"/>
        <end position="267"/>
    </location>
</feature>
<feature type="transmembrane region" description="Helical" evidence="2">
    <location>
        <begin position="268"/>
        <end position="288"/>
    </location>
</feature>
<feature type="topological domain" description="Cytoplasmic" evidence="1">
    <location>
        <begin position="289"/>
        <end position="372"/>
    </location>
</feature>
<feature type="splice variant" id="VSP_037474" description="In isoform E." evidence="9">
    <original>LDIFRGLKNLVKVSHVKTDSIVFRLHYSITVMILMSFSLIITTRQYVGNPIDCVHTKDIPEDVLNTYCWIQSTYTLKSLFLKKQGVSVPYPGIGNSDGDPADKKHYKYYQWVCFCLFF</original>
    <variation>MGRHCHVPKQTHHIQFAQLAQSPAVCGLSESAANLRYKLLLICHRVGIKIPRQKKIPTTYNE</variation>
    <location>
        <begin position="2"/>
        <end position="119"/>
    </location>
</feature>
<feature type="splice variant" id="VSP_036913" description="In isoform D." evidence="8">
    <original>LDIFRGLKNLVKVSHVKTDSIVFRLHYSITVMILMSFSLIITTRQYVGNPIDCVHTKDIPEDVLNTYCWIQSTYTLKSLFLKKQGVSVPYPGIGNSDGDPADKKHYKYYQWVCFC</original>
    <variation>YKPDTLTRRGSLRSLRSAPLLSTVLESTLSLTRIHPIASLELPGLDYAVHSQSAFGAYGLAHPRDLATCTSLRSGLAAITAASASAAGGVSQSQSALLGRYGPNASIRHGERKIVQPKRVLSRKLKPHLVADTVKQYISRAQRTTKKGSQEQQNMEFLRGVYAFMQVSRSSVSHVKIDSPVFRLHTNATVILLITFSIAVTTRQYVGNPIDCVHTRDIPEDVLNTYCWIHSTYTVVDAFMKKQGSEVPFPGVHNSQGRGPLTIKHTKYYQWVAFT</variation>
    <location>
        <begin position="2"/>
        <end position="116"/>
    </location>
</feature>
<feature type="splice variant" id="VSP_002678" description="In isoform Neural." evidence="7">
    <original>LDIFRGLKNLVKVSHVKTDSIVFRLHYSITVMILMSFSLIITTRQYVGNPIDCVHTK</original>
    <variation>VSHVKIDSPVFRLHTNATVILLITFSIAVTTRQYVGNPIDCVHTR</variation>
    <location>
        <begin position="2"/>
        <end position="58"/>
    </location>
</feature>
<feature type="splice variant" id="VSP_036914" description="In isoform F." evidence="9">
    <original>LDIFRGLKNLVKVSHVKTDSIVFRLHYSITVMILM</original>
    <variation>KKQGSEVPFPGVHNSQGRGPLTIKHTKYYQWVAFT</variation>
    <location>
        <begin position="2"/>
        <end position="36"/>
    </location>
</feature>
<feature type="splice variant" id="VSP_036915" description="In isoform F." evidence="9">
    <location>
        <begin position="37"/>
        <end position="116"/>
    </location>
</feature>
<feature type="splice variant" id="VSP_002679" description="In isoform Neural." evidence="7">
    <original>QSTYTLKSLFLKKQGVSVPYPGIGNSDGDPADKKHYKYYQWVCFC</original>
    <variation>HSTYTVVDAFMKKQGSEVPFPGVHNSQGRGPLTIKHTKYYQWVAFT</variation>
    <location>
        <begin position="72"/>
        <end position="116"/>
    </location>
</feature>
<feature type="splice variant" id="VSP_012897" description="In isoform B." evidence="6">
    <original>A</original>
    <variation>P</variation>
    <location>
        <position position="121"/>
    </location>
</feature>
<feature type="splice variant" id="VSP_012898" description="In isoform B." evidence="6">
    <location>
        <begin position="123"/>
        <end position="372"/>
    </location>
</feature>
<feature type="sequence conflict" description="In Ref. 2; AAA28745 and 7; ABE73233." evidence="9" ref="2 7">
    <original>I</original>
    <variation>M</variation>
    <location>
        <position position="232"/>
    </location>
</feature>
<feature type="sequence conflict" description="In Ref. 4; AAC46584." evidence="9" ref="4">
    <original>SGE</original>
    <variation>GEV</variation>
    <location>
        <begin position="247"/>
        <end position="249"/>
    </location>
</feature>
<feature type="sequence conflict" description="In Ref. 7; ABE73233." evidence="9" ref="7">
    <original>K</original>
    <variation>E</variation>
    <location sequence="P33085-4">
        <position position="3"/>
    </location>
</feature>
<dbReference type="EMBL" id="M98872">
    <property type="protein sequence ID" value="AAA89079.1"/>
    <property type="molecule type" value="mRNA"/>
</dbReference>
<dbReference type="EMBL" id="X65103">
    <property type="protein sequence ID" value="CAA46228.1"/>
    <property type="molecule type" value="mRNA"/>
</dbReference>
<dbReference type="EMBL" id="L13306">
    <property type="protein sequence ID" value="AAA28745.1"/>
    <property type="molecule type" value="mRNA"/>
</dbReference>
<dbReference type="EMBL" id="S78495">
    <property type="protein sequence ID" value="AAB34769.1"/>
    <property type="molecule type" value="mRNA"/>
</dbReference>
<dbReference type="EMBL" id="U17330">
    <property type="protein sequence ID" value="AAC46584.1"/>
    <property type="molecule type" value="mRNA"/>
</dbReference>
<dbReference type="EMBL" id="AE014298">
    <property type="protein sequence ID" value="AAF50880.2"/>
    <property type="molecule type" value="Genomic_DNA"/>
</dbReference>
<dbReference type="EMBL" id="AE014298">
    <property type="protein sequence ID" value="AAF50882.2"/>
    <property type="molecule type" value="Genomic_DNA"/>
</dbReference>
<dbReference type="EMBL" id="AE014298">
    <property type="protein sequence ID" value="AAF50883.1"/>
    <property type="molecule type" value="Genomic_DNA"/>
</dbReference>
<dbReference type="EMBL" id="AE014298">
    <property type="protein sequence ID" value="ABW09456.2"/>
    <property type="molecule type" value="Genomic_DNA"/>
</dbReference>
<dbReference type="EMBL" id="AE014298">
    <property type="protein sequence ID" value="ACL82952.1"/>
    <property type="molecule type" value="Genomic_DNA"/>
</dbReference>
<dbReference type="EMBL" id="BT025062">
    <property type="protein sequence ID" value="ABE73233.1"/>
    <property type="molecule type" value="mRNA"/>
</dbReference>
<dbReference type="PIR" id="A40734">
    <property type="entry name" value="A40734"/>
</dbReference>
<dbReference type="PIR" id="JN0441">
    <property type="entry name" value="JN0441"/>
</dbReference>
<dbReference type="RefSeq" id="NP_001097038.2">
    <molecule id="P33085-6"/>
    <property type="nucleotide sequence ID" value="NM_001103568.3"/>
</dbReference>
<dbReference type="RefSeq" id="NP_001138222.1">
    <molecule id="P33085-5"/>
    <property type="nucleotide sequence ID" value="NM_001144750.2"/>
</dbReference>
<dbReference type="RefSeq" id="NP_523425.2">
    <molecule id="P33085-2"/>
    <property type="nucleotide sequence ID" value="NM_078701.3"/>
</dbReference>
<dbReference type="RefSeq" id="NP_608410.2">
    <molecule id="P33085-4"/>
    <property type="nucleotide sequence ID" value="NM_134566.3"/>
</dbReference>
<dbReference type="RefSeq" id="NP_728361.1">
    <molecule id="P33085-1"/>
    <property type="nucleotide sequence ID" value="NM_170660.2"/>
</dbReference>
<dbReference type="SMR" id="P33085"/>
<dbReference type="BioGRID" id="59350">
    <property type="interactions" value="6"/>
</dbReference>
<dbReference type="FunCoup" id="P33085">
    <property type="interactions" value="65"/>
</dbReference>
<dbReference type="IntAct" id="P33085">
    <property type="interactions" value="1"/>
</dbReference>
<dbReference type="STRING" id="7227.FBpp0111481"/>
<dbReference type="TCDB" id="1.A.25.1.4">
    <property type="family name" value="the gap junction-forming innexin (innexin) family"/>
</dbReference>
<dbReference type="PaxDb" id="7227-FBpp0111481"/>
<dbReference type="EnsemblMetazoa" id="FBtr0112569">
    <molecule id="P33085-4"/>
    <property type="protein sequence ID" value="FBpp0111481"/>
    <property type="gene ID" value="FBgn0085387"/>
</dbReference>
<dbReference type="EnsemblMetazoa" id="FBtr0112570">
    <molecule id="P33085-2"/>
    <property type="protein sequence ID" value="FBpp0111482"/>
    <property type="gene ID" value="FBgn0085387"/>
</dbReference>
<dbReference type="EnsemblMetazoa" id="FBtr0112571">
    <molecule id="P33085-1"/>
    <property type="protein sequence ID" value="FBpp0111483"/>
    <property type="gene ID" value="FBgn0085387"/>
</dbReference>
<dbReference type="EnsemblMetazoa" id="FBtr0112572">
    <molecule id="P33085-6"/>
    <property type="protein sequence ID" value="FBpp0111484"/>
    <property type="gene ID" value="FBgn0085387"/>
</dbReference>
<dbReference type="EnsemblMetazoa" id="FBtr0114645">
    <molecule id="P33085-5"/>
    <property type="protein sequence ID" value="FBpp0113137"/>
    <property type="gene ID" value="FBgn0085387"/>
</dbReference>
<dbReference type="GeneID" id="33062"/>
<dbReference type="KEGG" id="dme:Dmel_CG34358"/>
<dbReference type="UCSC" id="CG34358-RD">
    <property type="organism name" value="d. melanogaster"/>
</dbReference>
<dbReference type="AGR" id="FB:FBgn0085387"/>
<dbReference type="CTD" id="33062"/>
<dbReference type="FlyBase" id="FBgn0085387">
    <property type="gene designation" value="shakB"/>
</dbReference>
<dbReference type="VEuPathDB" id="VectorBase:FBgn0085387"/>
<dbReference type="eggNOG" id="ENOG502QWRS">
    <property type="taxonomic scope" value="Eukaryota"/>
</dbReference>
<dbReference type="HOGENOM" id="CLU_035763_1_1_1"/>
<dbReference type="InParanoid" id="P33085"/>
<dbReference type="OMA" id="CQFFKFG"/>
<dbReference type="OrthoDB" id="5867527at2759"/>
<dbReference type="PhylomeDB" id="P33085"/>
<dbReference type="BioGRID-ORCS" id="33062">
    <property type="hits" value="0 hits in 1 CRISPR screen"/>
</dbReference>
<dbReference type="ChiTaRS" id="shakB">
    <property type="organism name" value="fly"/>
</dbReference>
<dbReference type="GenomeRNAi" id="33062"/>
<dbReference type="PRO" id="PR:P33085"/>
<dbReference type="Proteomes" id="UP000000803">
    <property type="component" value="Chromosome X"/>
</dbReference>
<dbReference type="Bgee" id="FBgn0085387">
    <property type="expression patterns" value="Expressed in lamina monopolar neuron L4 (Drosophila) in insect head and 214 other cell types or tissues"/>
</dbReference>
<dbReference type="ExpressionAtlas" id="P33085">
    <property type="expression patterns" value="baseline and differential"/>
</dbReference>
<dbReference type="GO" id="GO:0005921">
    <property type="term" value="C:gap junction"/>
    <property type="evidence" value="ECO:0000314"/>
    <property type="project" value="UniProtKB"/>
</dbReference>
<dbReference type="GO" id="GO:0005886">
    <property type="term" value="C:plasma membrane"/>
    <property type="evidence" value="ECO:0000314"/>
    <property type="project" value="FlyBase"/>
</dbReference>
<dbReference type="GO" id="GO:0005243">
    <property type="term" value="F:gap junction channel activity"/>
    <property type="evidence" value="ECO:0000315"/>
    <property type="project" value="UniProtKB"/>
</dbReference>
<dbReference type="GO" id="GO:0009881">
    <property type="term" value="F:photoreceptor activity"/>
    <property type="evidence" value="ECO:0000315"/>
    <property type="project" value="UniProtKB"/>
</dbReference>
<dbReference type="GO" id="GO:0010644">
    <property type="term" value="P:cell communication by electrical coupling"/>
    <property type="evidence" value="ECO:0000315"/>
    <property type="project" value="FlyBase"/>
</dbReference>
<dbReference type="GO" id="GO:0016264">
    <property type="term" value="P:gap junction assembly"/>
    <property type="evidence" value="ECO:0000315"/>
    <property type="project" value="UniProtKB"/>
</dbReference>
<dbReference type="GO" id="GO:0010496">
    <property type="term" value="P:intercellular transport"/>
    <property type="evidence" value="ECO:0000250"/>
    <property type="project" value="FlyBase"/>
</dbReference>
<dbReference type="GO" id="GO:0007630">
    <property type="term" value="P:jump response"/>
    <property type="evidence" value="ECO:0000315"/>
    <property type="project" value="FlyBase"/>
</dbReference>
<dbReference type="GO" id="GO:0034220">
    <property type="term" value="P:monoatomic ion transmembrane transport"/>
    <property type="evidence" value="ECO:0007669"/>
    <property type="project" value="UniProtKB-KW"/>
</dbReference>
<dbReference type="GO" id="GO:0007602">
    <property type="term" value="P:phototransduction"/>
    <property type="evidence" value="ECO:0000315"/>
    <property type="project" value="FlyBase"/>
</dbReference>
<dbReference type="GO" id="GO:0003254">
    <property type="term" value="P:regulation of membrane depolarization"/>
    <property type="evidence" value="ECO:0000315"/>
    <property type="project" value="FlyBase"/>
</dbReference>
<dbReference type="GO" id="GO:0009416">
    <property type="term" value="P:response to light stimulus"/>
    <property type="evidence" value="ECO:0000315"/>
    <property type="project" value="UniProtKB"/>
</dbReference>
<dbReference type="GO" id="GO:0055085">
    <property type="term" value="P:transmembrane transport"/>
    <property type="evidence" value="ECO:0000315"/>
    <property type="project" value="FlyBase"/>
</dbReference>
<dbReference type="InterPro" id="IPR000990">
    <property type="entry name" value="Innexin"/>
</dbReference>
<dbReference type="PANTHER" id="PTHR11893">
    <property type="entry name" value="INNEXIN"/>
    <property type="match status" value="1"/>
</dbReference>
<dbReference type="PANTHER" id="PTHR11893:SF40">
    <property type="entry name" value="INNEXIN SHAKING-B"/>
    <property type="match status" value="1"/>
</dbReference>
<dbReference type="Pfam" id="PF00876">
    <property type="entry name" value="Innexin"/>
    <property type="match status" value="1"/>
</dbReference>
<dbReference type="PRINTS" id="PR01262">
    <property type="entry name" value="INNEXIN"/>
</dbReference>
<dbReference type="PROSITE" id="PS51013">
    <property type="entry name" value="PANNEXIN"/>
    <property type="match status" value="1"/>
</dbReference>
<sequence>MLDIFRGLKNLVKVSHVKTDSIVFRLHYSITVMILMSFSLIITTRQYVGNPIDCVHTKDIPEDVLNTYCWIQSTYTLKSLFLKKQGVSVPYPGIGNSDGDPADKKHYKYYQWVCFCLFFQAILFYTPRWLWKSWEGGKIHALIMDLDIGICSEAEKKQKKKLLLDYLWENLRYHNWWAYRYYVCELLALINVIGQMFLMNRFFDGEFITFGLKVIDYMETDQEDRMDPMIYIFPRMTKCTFFKYGSSGEVEKHDAICILPLNVVNEKIYIFLWFWFILLTFLTLLTLIYRVVIIFSPRMRVYLFRMRFRLVRRDAIEIIVRRSKMGDWFLLYLLGENIDTVIFRDVVQDLANRLGHNQHHRVPGLKGEIQDA</sequence>
<organism>
    <name type="scientific">Drosophila melanogaster</name>
    <name type="common">Fruit fly</name>
    <dbReference type="NCBI Taxonomy" id="7227"/>
    <lineage>
        <taxon>Eukaryota</taxon>
        <taxon>Metazoa</taxon>
        <taxon>Ecdysozoa</taxon>
        <taxon>Arthropoda</taxon>
        <taxon>Hexapoda</taxon>
        <taxon>Insecta</taxon>
        <taxon>Pterygota</taxon>
        <taxon>Neoptera</taxon>
        <taxon>Endopterygota</taxon>
        <taxon>Diptera</taxon>
        <taxon>Brachycera</taxon>
        <taxon>Muscomorpha</taxon>
        <taxon>Ephydroidea</taxon>
        <taxon>Drosophilidae</taxon>
        <taxon>Drosophila</taxon>
        <taxon>Sophophora</taxon>
    </lineage>
</organism>
<evidence type="ECO:0000255" key="1"/>
<evidence type="ECO:0000255" key="2">
    <source>
        <dbReference type="PROSITE-ProRule" id="PRU00351"/>
    </source>
</evidence>
<evidence type="ECO:0000269" key="3">
    <source>
    </source>
</evidence>
<evidence type="ECO:0000269" key="4">
    <source>
    </source>
</evidence>
<evidence type="ECO:0000269" key="5">
    <source>
    </source>
</evidence>
<evidence type="ECO:0000303" key="6">
    <source>
    </source>
</evidence>
<evidence type="ECO:0000303" key="7">
    <source>
    </source>
</evidence>
<evidence type="ECO:0000303" key="8">
    <source ref="7"/>
</evidence>
<evidence type="ECO:0000305" key="9"/>
<protein>
    <recommendedName>
        <fullName>Innexin shaking-B</fullName>
    </recommendedName>
    <alternativeName>
        <fullName>Protein passover</fullName>
    </alternativeName>
</protein>
<keyword id="KW-0025">Alternative splicing</keyword>
<keyword id="KW-0085">Behavior</keyword>
<keyword id="KW-0965">Cell junction</keyword>
<keyword id="KW-1003">Cell membrane</keyword>
<keyword id="KW-0303">Gap junction</keyword>
<keyword id="KW-0407">Ion channel</keyword>
<keyword id="KW-0406">Ion transport</keyword>
<keyword id="KW-0472">Membrane</keyword>
<keyword id="KW-1185">Reference proteome</keyword>
<keyword id="KW-0812">Transmembrane</keyword>
<keyword id="KW-1133">Transmembrane helix</keyword>
<keyword id="KW-0813">Transport</keyword>
<proteinExistence type="evidence at protein level"/>